<organism>
    <name type="scientific">Leptospira borgpetersenii serovar Hardjo-bovis (strain JB197)</name>
    <dbReference type="NCBI Taxonomy" id="355277"/>
    <lineage>
        <taxon>Bacteria</taxon>
        <taxon>Pseudomonadati</taxon>
        <taxon>Spirochaetota</taxon>
        <taxon>Spirochaetia</taxon>
        <taxon>Leptospirales</taxon>
        <taxon>Leptospiraceae</taxon>
        <taxon>Leptospira</taxon>
    </lineage>
</organism>
<evidence type="ECO:0000255" key="1">
    <source>
        <dbReference type="HAMAP-Rule" id="MF_01416"/>
    </source>
</evidence>
<feature type="chain" id="PRO_1000184740" description="ATP synthase subunit delta">
    <location>
        <begin position="1"/>
        <end position="186"/>
    </location>
</feature>
<sequence length="186" mass="20913">MNDSGVSKIYASALLGAVNSPEEVEQELGDLVQLLFKEEKIRNFFLSPTVSIEEKENILEKNLRGKILDVTLNFLGVLLNKGRFINLPEIQKRFTVELDKKKGRVRAQIKSYPSLEPAQITKLGSILSEKFKSEFILEVSEDKTLLGGFVVQFNDLKIEKSIASQLGEIKKAMLEKKLPVGAVYEN</sequence>
<proteinExistence type="inferred from homology"/>
<reference key="1">
    <citation type="journal article" date="2006" name="Proc. Natl. Acad. Sci. U.S.A.">
        <title>Genome reduction in Leptospira borgpetersenii reflects limited transmission potential.</title>
        <authorList>
            <person name="Bulach D.M."/>
            <person name="Zuerner R.L."/>
            <person name="Wilson P."/>
            <person name="Seemann T."/>
            <person name="McGrath A."/>
            <person name="Cullen P.A."/>
            <person name="Davis J."/>
            <person name="Johnson M."/>
            <person name="Kuczek E."/>
            <person name="Alt D.P."/>
            <person name="Peterson-Burch B."/>
            <person name="Coppel R.L."/>
            <person name="Rood J.I."/>
            <person name="Davies J.K."/>
            <person name="Adler B."/>
        </authorList>
    </citation>
    <scope>NUCLEOTIDE SEQUENCE [LARGE SCALE GENOMIC DNA]</scope>
    <source>
        <strain>JB197</strain>
    </source>
</reference>
<accession>Q04S15</accession>
<name>ATPD_LEPBJ</name>
<comment type="function">
    <text evidence="1">F(1)F(0) ATP synthase produces ATP from ADP in the presence of a proton or sodium gradient. F-type ATPases consist of two structural domains, F(1) containing the extramembraneous catalytic core and F(0) containing the membrane proton channel, linked together by a central stalk and a peripheral stalk. During catalysis, ATP synthesis in the catalytic domain of F(1) is coupled via a rotary mechanism of the central stalk subunits to proton translocation.</text>
</comment>
<comment type="function">
    <text evidence="1">This protein is part of the stalk that links CF(0) to CF(1). It either transmits conformational changes from CF(0) to CF(1) or is implicated in proton conduction.</text>
</comment>
<comment type="subunit">
    <text evidence="1">F-type ATPases have 2 components, F(1) - the catalytic core - and F(0) - the membrane proton channel. F(1) has five subunits: alpha(3), beta(3), gamma(1), delta(1), epsilon(1). F(0) has three main subunits: a(1), b(2) and c(10-14). The alpha and beta chains form an alternating ring which encloses part of the gamma chain. F(1) is attached to F(0) by a central stalk formed by the gamma and epsilon chains, while a peripheral stalk is formed by the delta and b chains.</text>
</comment>
<comment type="subcellular location">
    <subcellularLocation>
        <location evidence="1">Cell inner membrane</location>
        <topology evidence="1">Peripheral membrane protein</topology>
    </subcellularLocation>
</comment>
<comment type="similarity">
    <text evidence="1">Belongs to the ATPase delta chain family.</text>
</comment>
<protein>
    <recommendedName>
        <fullName evidence="1">ATP synthase subunit delta</fullName>
    </recommendedName>
    <alternativeName>
        <fullName evidence="1">ATP synthase F(1) sector subunit delta</fullName>
    </alternativeName>
    <alternativeName>
        <fullName evidence="1">F-type ATPase subunit delta</fullName>
        <shortName evidence="1">F-ATPase subunit delta</shortName>
    </alternativeName>
</protein>
<dbReference type="EMBL" id="CP000350">
    <property type="protein sequence ID" value="ABJ76305.1"/>
    <property type="molecule type" value="Genomic_DNA"/>
</dbReference>
<dbReference type="RefSeq" id="WP_002740769.1">
    <property type="nucleotide sequence ID" value="NC_008510.1"/>
</dbReference>
<dbReference type="SMR" id="Q04S15"/>
<dbReference type="KEGG" id="lbj:LBJ_1755"/>
<dbReference type="HOGENOM" id="CLU_085114_4_1_12"/>
<dbReference type="Proteomes" id="UP000000656">
    <property type="component" value="Chromosome 1"/>
</dbReference>
<dbReference type="GO" id="GO:0005886">
    <property type="term" value="C:plasma membrane"/>
    <property type="evidence" value="ECO:0007669"/>
    <property type="project" value="UniProtKB-SubCell"/>
</dbReference>
<dbReference type="GO" id="GO:0045259">
    <property type="term" value="C:proton-transporting ATP synthase complex"/>
    <property type="evidence" value="ECO:0007669"/>
    <property type="project" value="UniProtKB-KW"/>
</dbReference>
<dbReference type="GO" id="GO:0046933">
    <property type="term" value="F:proton-transporting ATP synthase activity, rotational mechanism"/>
    <property type="evidence" value="ECO:0007669"/>
    <property type="project" value="UniProtKB-UniRule"/>
</dbReference>
<dbReference type="Gene3D" id="1.10.520.20">
    <property type="entry name" value="N-terminal domain of the delta subunit of the F1F0-ATP synthase"/>
    <property type="match status" value="1"/>
</dbReference>
<dbReference type="HAMAP" id="MF_01416">
    <property type="entry name" value="ATP_synth_delta_bact"/>
    <property type="match status" value="1"/>
</dbReference>
<dbReference type="InterPro" id="IPR026015">
    <property type="entry name" value="ATP_synth_OSCP/delta_N_sf"/>
</dbReference>
<dbReference type="InterPro" id="IPR000711">
    <property type="entry name" value="ATPase_OSCP/dsu"/>
</dbReference>
<dbReference type="NCBIfam" id="TIGR01145">
    <property type="entry name" value="ATP_synt_delta"/>
    <property type="match status" value="1"/>
</dbReference>
<dbReference type="NCBIfam" id="NF009969">
    <property type="entry name" value="PRK13434.1"/>
    <property type="match status" value="1"/>
</dbReference>
<dbReference type="PANTHER" id="PTHR11910">
    <property type="entry name" value="ATP SYNTHASE DELTA CHAIN"/>
    <property type="match status" value="1"/>
</dbReference>
<dbReference type="Pfam" id="PF00213">
    <property type="entry name" value="OSCP"/>
    <property type="match status" value="1"/>
</dbReference>
<dbReference type="PRINTS" id="PR00125">
    <property type="entry name" value="ATPASEDELTA"/>
</dbReference>
<dbReference type="SUPFAM" id="SSF47928">
    <property type="entry name" value="N-terminal domain of the delta subunit of the F1F0-ATP synthase"/>
    <property type="match status" value="1"/>
</dbReference>
<keyword id="KW-0066">ATP synthesis</keyword>
<keyword id="KW-0997">Cell inner membrane</keyword>
<keyword id="KW-1003">Cell membrane</keyword>
<keyword id="KW-0139">CF(1)</keyword>
<keyword id="KW-0375">Hydrogen ion transport</keyword>
<keyword id="KW-0406">Ion transport</keyword>
<keyword id="KW-0472">Membrane</keyword>
<keyword id="KW-0813">Transport</keyword>
<gene>
    <name evidence="1" type="primary">atpH</name>
    <name type="ordered locus">LBJ_1755</name>
</gene>